<organism>
    <name type="scientific">Shewanella woodyi (strain ATCC 51908 / MS32)</name>
    <dbReference type="NCBI Taxonomy" id="392500"/>
    <lineage>
        <taxon>Bacteria</taxon>
        <taxon>Pseudomonadati</taxon>
        <taxon>Pseudomonadota</taxon>
        <taxon>Gammaproteobacteria</taxon>
        <taxon>Alteromonadales</taxon>
        <taxon>Shewanellaceae</taxon>
        <taxon>Shewanella</taxon>
    </lineage>
</organism>
<proteinExistence type="inferred from homology"/>
<accession>B1KMY7</accession>
<keyword id="KW-1185">Reference proteome</keyword>
<keyword id="KW-0687">Ribonucleoprotein</keyword>
<keyword id="KW-0689">Ribosomal protein</keyword>
<keyword id="KW-0694">RNA-binding</keyword>
<keyword id="KW-0699">rRNA-binding</keyword>
<keyword id="KW-0820">tRNA-binding</keyword>
<gene>
    <name evidence="1" type="primary">rpsG</name>
    <name type="ordered locus">Swoo_4694</name>
</gene>
<dbReference type="EMBL" id="CP000961">
    <property type="protein sequence ID" value="ACA88944.1"/>
    <property type="molecule type" value="Genomic_DNA"/>
</dbReference>
<dbReference type="RefSeq" id="WP_012327263.1">
    <property type="nucleotide sequence ID" value="NC_010506.1"/>
</dbReference>
<dbReference type="SMR" id="B1KMY7"/>
<dbReference type="STRING" id="392500.Swoo_4694"/>
<dbReference type="KEGG" id="swd:Swoo_4694"/>
<dbReference type="eggNOG" id="COG0049">
    <property type="taxonomic scope" value="Bacteria"/>
</dbReference>
<dbReference type="HOGENOM" id="CLU_072226_1_1_6"/>
<dbReference type="Proteomes" id="UP000002168">
    <property type="component" value="Chromosome"/>
</dbReference>
<dbReference type="GO" id="GO:0015935">
    <property type="term" value="C:small ribosomal subunit"/>
    <property type="evidence" value="ECO:0007669"/>
    <property type="project" value="InterPro"/>
</dbReference>
<dbReference type="GO" id="GO:0019843">
    <property type="term" value="F:rRNA binding"/>
    <property type="evidence" value="ECO:0007669"/>
    <property type="project" value="UniProtKB-UniRule"/>
</dbReference>
<dbReference type="GO" id="GO:0003735">
    <property type="term" value="F:structural constituent of ribosome"/>
    <property type="evidence" value="ECO:0007669"/>
    <property type="project" value="InterPro"/>
</dbReference>
<dbReference type="GO" id="GO:0000049">
    <property type="term" value="F:tRNA binding"/>
    <property type="evidence" value="ECO:0007669"/>
    <property type="project" value="UniProtKB-UniRule"/>
</dbReference>
<dbReference type="GO" id="GO:0006412">
    <property type="term" value="P:translation"/>
    <property type="evidence" value="ECO:0007669"/>
    <property type="project" value="UniProtKB-UniRule"/>
</dbReference>
<dbReference type="CDD" id="cd14869">
    <property type="entry name" value="uS7_Bacteria"/>
    <property type="match status" value="1"/>
</dbReference>
<dbReference type="FunFam" id="1.10.455.10:FF:000001">
    <property type="entry name" value="30S ribosomal protein S7"/>
    <property type="match status" value="1"/>
</dbReference>
<dbReference type="Gene3D" id="1.10.455.10">
    <property type="entry name" value="Ribosomal protein S7 domain"/>
    <property type="match status" value="1"/>
</dbReference>
<dbReference type="HAMAP" id="MF_00480_B">
    <property type="entry name" value="Ribosomal_uS7_B"/>
    <property type="match status" value="1"/>
</dbReference>
<dbReference type="InterPro" id="IPR000235">
    <property type="entry name" value="Ribosomal_uS7"/>
</dbReference>
<dbReference type="InterPro" id="IPR005717">
    <property type="entry name" value="Ribosomal_uS7_bac/org-type"/>
</dbReference>
<dbReference type="InterPro" id="IPR020606">
    <property type="entry name" value="Ribosomal_uS7_CS"/>
</dbReference>
<dbReference type="InterPro" id="IPR023798">
    <property type="entry name" value="Ribosomal_uS7_dom"/>
</dbReference>
<dbReference type="InterPro" id="IPR036823">
    <property type="entry name" value="Ribosomal_uS7_dom_sf"/>
</dbReference>
<dbReference type="NCBIfam" id="TIGR01029">
    <property type="entry name" value="rpsG_bact"/>
    <property type="match status" value="1"/>
</dbReference>
<dbReference type="PANTHER" id="PTHR11205">
    <property type="entry name" value="RIBOSOMAL PROTEIN S7"/>
    <property type="match status" value="1"/>
</dbReference>
<dbReference type="Pfam" id="PF00177">
    <property type="entry name" value="Ribosomal_S7"/>
    <property type="match status" value="1"/>
</dbReference>
<dbReference type="PIRSF" id="PIRSF002122">
    <property type="entry name" value="RPS7p_RPS7a_RPS5e_RPS7o"/>
    <property type="match status" value="1"/>
</dbReference>
<dbReference type="SUPFAM" id="SSF47973">
    <property type="entry name" value="Ribosomal protein S7"/>
    <property type="match status" value="1"/>
</dbReference>
<dbReference type="PROSITE" id="PS00052">
    <property type="entry name" value="RIBOSOMAL_S7"/>
    <property type="match status" value="1"/>
</dbReference>
<feature type="chain" id="PRO_1000126002" description="Small ribosomal subunit protein uS7">
    <location>
        <begin position="1"/>
        <end position="156"/>
    </location>
</feature>
<comment type="function">
    <text evidence="1">One of the primary rRNA binding proteins, it binds directly to 16S rRNA where it nucleates assembly of the head domain of the 30S subunit. Is located at the subunit interface close to the decoding center, probably blocks exit of the E-site tRNA.</text>
</comment>
<comment type="subunit">
    <text evidence="1">Part of the 30S ribosomal subunit. Contacts proteins S9 and S11.</text>
</comment>
<comment type="similarity">
    <text evidence="1">Belongs to the universal ribosomal protein uS7 family.</text>
</comment>
<protein>
    <recommendedName>
        <fullName evidence="1">Small ribosomal subunit protein uS7</fullName>
    </recommendedName>
    <alternativeName>
        <fullName evidence="2">30S ribosomal protein S7</fullName>
    </alternativeName>
</protein>
<evidence type="ECO:0000255" key="1">
    <source>
        <dbReference type="HAMAP-Rule" id="MF_00480"/>
    </source>
</evidence>
<evidence type="ECO:0000305" key="2"/>
<sequence>MPRRRVVGQRKILPDPKFNSELLAKFINVIMQDGKKSTAEKIIYKALDTVAEKKSEDHLVILEAALENVRPSVEVKSRRVGGSTYQVPCEVRPVRRNALGMRWLVEAARKRGEKSMALRLAGELLDASENKGTAVKKREDVHRMAEANKAFAHYRW</sequence>
<name>RS7_SHEWM</name>
<reference key="1">
    <citation type="submission" date="2008-02" db="EMBL/GenBank/DDBJ databases">
        <title>Complete sequence of Shewanella woodyi ATCC 51908.</title>
        <authorList>
            <consortium name="US DOE Joint Genome Institute"/>
            <person name="Copeland A."/>
            <person name="Lucas S."/>
            <person name="Lapidus A."/>
            <person name="Glavina del Rio T."/>
            <person name="Dalin E."/>
            <person name="Tice H."/>
            <person name="Bruce D."/>
            <person name="Goodwin L."/>
            <person name="Pitluck S."/>
            <person name="Sims D."/>
            <person name="Brettin T."/>
            <person name="Detter J.C."/>
            <person name="Han C."/>
            <person name="Kuske C.R."/>
            <person name="Schmutz J."/>
            <person name="Larimer F."/>
            <person name="Land M."/>
            <person name="Hauser L."/>
            <person name="Kyrpides N."/>
            <person name="Lykidis A."/>
            <person name="Zhao J.-S."/>
            <person name="Richardson P."/>
        </authorList>
    </citation>
    <scope>NUCLEOTIDE SEQUENCE [LARGE SCALE GENOMIC DNA]</scope>
    <source>
        <strain>ATCC 51908 / MS32</strain>
    </source>
</reference>